<proteinExistence type="inferred from homology"/>
<name>SKT5_MALR7</name>
<feature type="chain" id="PRO_0000459491" description="Chitin synthase regulator SKT5">
    <location>
        <begin position="1"/>
        <end position="1442"/>
    </location>
</feature>
<feature type="repeat" description="Sel1-like 1" evidence="2">
    <location>
        <begin position="198"/>
        <end position="236"/>
    </location>
</feature>
<feature type="repeat" description="Sel1-like 2" evidence="2">
    <location>
        <begin position="237"/>
        <end position="272"/>
    </location>
</feature>
<feature type="repeat" description="Sel1-like 3" evidence="2">
    <location>
        <begin position="273"/>
        <end position="309"/>
    </location>
</feature>
<feature type="repeat" description="Sel1-like 4" evidence="2">
    <location>
        <begin position="313"/>
        <end position="350"/>
    </location>
</feature>
<feature type="repeat" description="Sel1-like 5" evidence="2">
    <location>
        <begin position="351"/>
        <end position="387"/>
    </location>
</feature>
<feature type="repeat" description="Sel1-like 6" evidence="2">
    <location>
        <begin position="388"/>
        <end position="425"/>
    </location>
</feature>
<feature type="repeat" description="Sel1-like 7" evidence="2">
    <location>
        <begin position="426"/>
        <end position="461"/>
    </location>
</feature>
<feature type="region of interest" description="Disordered" evidence="3">
    <location>
        <begin position="1"/>
        <end position="54"/>
    </location>
</feature>
<feature type="region of interest" description="Disordered" evidence="3">
    <location>
        <begin position="72"/>
        <end position="117"/>
    </location>
</feature>
<feature type="region of interest" description="Disordered" evidence="3">
    <location>
        <begin position="550"/>
        <end position="1402"/>
    </location>
</feature>
<feature type="compositionally biased region" description="Basic and acidic residues" evidence="3">
    <location>
        <begin position="12"/>
        <end position="25"/>
    </location>
</feature>
<feature type="compositionally biased region" description="Polar residues" evidence="3">
    <location>
        <begin position="39"/>
        <end position="53"/>
    </location>
</feature>
<feature type="compositionally biased region" description="Basic and acidic residues" evidence="3">
    <location>
        <begin position="75"/>
        <end position="99"/>
    </location>
</feature>
<feature type="compositionally biased region" description="Pro residues" evidence="3">
    <location>
        <begin position="605"/>
        <end position="617"/>
    </location>
</feature>
<feature type="compositionally biased region" description="Basic residues" evidence="3">
    <location>
        <begin position="633"/>
        <end position="648"/>
    </location>
</feature>
<feature type="compositionally biased region" description="Low complexity" evidence="3">
    <location>
        <begin position="747"/>
        <end position="758"/>
    </location>
</feature>
<feature type="compositionally biased region" description="Basic and acidic residues" evidence="3">
    <location>
        <begin position="762"/>
        <end position="804"/>
    </location>
</feature>
<feature type="compositionally biased region" description="Basic and acidic residues" evidence="3">
    <location>
        <begin position="821"/>
        <end position="840"/>
    </location>
</feature>
<feature type="compositionally biased region" description="Basic and acidic residues" evidence="3">
    <location>
        <begin position="859"/>
        <end position="875"/>
    </location>
</feature>
<feature type="compositionally biased region" description="Low complexity" evidence="3">
    <location>
        <begin position="876"/>
        <end position="891"/>
    </location>
</feature>
<feature type="compositionally biased region" description="Pro residues" evidence="3">
    <location>
        <begin position="964"/>
        <end position="977"/>
    </location>
</feature>
<feature type="compositionally biased region" description="Pro residues" evidence="3">
    <location>
        <begin position="1139"/>
        <end position="1158"/>
    </location>
</feature>
<feature type="compositionally biased region" description="Pro residues" evidence="3">
    <location>
        <begin position="1200"/>
        <end position="1220"/>
    </location>
</feature>
<feature type="compositionally biased region" description="Polar residues" evidence="3">
    <location>
        <begin position="1232"/>
        <end position="1243"/>
    </location>
</feature>
<feature type="compositionally biased region" description="Pro residues" evidence="3">
    <location>
        <begin position="1271"/>
        <end position="1282"/>
    </location>
</feature>
<feature type="compositionally biased region" description="Low complexity" evidence="3">
    <location>
        <begin position="1295"/>
        <end position="1305"/>
    </location>
</feature>
<feature type="compositionally biased region" description="Pro residues" evidence="3">
    <location>
        <begin position="1306"/>
        <end position="1322"/>
    </location>
</feature>
<feature type="compositionally biased region" description="Pro residues" evidence="3">
    <location>
        <begin position="1371"/>
        <end position="1386"/>
    </location>
</feature>
<feature type="compositionally biased region" description="Polar residues" evidence="3">
    <location>
        <begin position="1392"/>
        <end position="1402"/>
    </location>
</feature>
<organism>
    <name type="scientific">Malassezia restricta (strain ATCC 96810 / NBRC 103918 / CBS 7877)</name>
    <name type="common">Seborrheic dermatitis infection agent</name>
    <dbReference type="NCBI Taxonomy" id="425264"/>
    <lineage>
        <taxon>Eukaryota</taxon>
        <taxon>Fungi</taxon>
        <taxon>Dikarya</taxon>
        <taxon>Basidiomycota</taxon>
        <taxon>Ustilaginomycotina</taxon>
        <taxon>Malasseziomycetes</taxon>
        <taxon>Malasseziales</taxon>
        <taxon>Malasseziaceae</taxon>
        <taxon>Malassezia</taxon>
    </lineage>
</organism>
<accession>P9WEM4</accession>
<accession>A0A3G2S9C2</accession>
<comment type="function">
    <text evidence="1">Activator of the chitin synthase CHS3 which polymerizes chitin, a structural polymer of the fungal cell wall.</text>
</comment>
<comment type="subcellular location">
    <subcellularLocation>
        <location evidence="1">Cell membrane</location>
        <topology evidence="1">Lipid-anchor</topology>
        <orientation evidence="1">Cytoplasmic side</orientation>
    </subcellularLocation>
</comment>
<comment type="similarity">
    <text evidence="5">Belongs to the SKT5 family.</text>
</comment>
<comment type="sequence caution" evidence="5">
    <conflict type="erroneous gene model prediction">
        <sequence resource="EMBL-CDS" id="AYO44685"/>
    </conflict>
    <text>The predicted gene DNF11_3735 has been split into 2 genes: LIP2 and SKT5.</text>
</comment>
<evidence type="ECO:0000250" key="1">
    <source>
        <dbReference type="UniProtKB" id="P34226"/>
    </source>
</evidence>
<evidence type="ECO:0000255" key="2"/>
<evidence type="ECO:0000256" key="3">
    <source>
        <dbReference type="SAM" id="MobiDB-lite"/>
    </source>
</evidence>
<evidence type="ECO:0000303" key="4">
    <source>
    </source>
</evidence>
<evidence type="ECO:0000305" key="5"/>
<protein>
    <recommendedName>
        <fullName evidence="1">Chitin synthase regulator SKT5</fullName>
    </recommendedName>
</protein>
<dbReference type="EMBL" id="CP033154">
    <property type="protein sequence ID" value="AYO44685.1"/>
    <property type="status" value="ALT_SEQ"/>
    <property type="molecule type" value="Genomic_DNA"/>
</dbReference>
<dbReference type="SMR" id="P9WEM4"/>
<dbReference type="Proteomes" id="UP000269793">
    <property type="component" value="Chromosome vii"/>
</dbReference>
<dbReference type="GO" id="GO:0005886">
    <property type="term" value="C:plasma membrane"/>
    <property type="evidence" value="ECO:0007669"/>
    <property type="project" value="UniProtKB-SubCell"/>
</dbReference>
<dbReference type="Gene3D" id="1.25.40.10">
    <property type="entry name" value="Tetratricopeptide repeat domain"/>
    <property type="match status" value="2"/>
</dbReference>
<dbReference type="InterPro" id="IPR051726">
    <property type="entry name" value="Chitin_Synth_Reg"/>
</dbReference>
<dbReference type="InterPro" id="IPR006597">
    <property type="entry name" value="Sel1-like"/>
</dbReference>
<dbReference type="InterPro" id="IPR011990">
    <property type="entry name" value="TPR-like_helical_dom_sf"/>
</dbReference>
<dbReference type="PANTHER" id="PTHR46430:SF1">
    <property type="entry name" value="CHITIN SYNTHASE REGULATOR SKT5-RELATED"/>
    <property type="match status" value="1"/>
</dbReference>
<dbReference type="PANTHER" id="PTHR46430">
    <property type="entry name" value="PROTEIN SKT5-RELATED"/>
    <property type="match status" value="1"/>
</dbReference>
<dbReference type="Pfam" id="PF08238">
    <property type="entry name" value="Sel1"/>
    <property type="match status" value="7"/>
</dbReference>
<dbReference type="SMART" id="SM00671">
    <property type="entry name" value="SEL1"/>
    <property type="match status" value="7"/>
</dbReference>
<dbReference type="SUPFAM" id="SSF81901">
    <property type="entry name" value="HCP-like"/>
    <property type="match status" value="1"/>
</dbReference>
<reference key="1">
    <citation type="journal article" date="2019" name="Microbiol. Resour. Announc.">
        <title>Complete Genome Sequence of Malassezia restricta CBS 7877, an Opportunist Pathogen Involved in Dandruff and Seborrheic Dermatitis.</title>
        <authorList>
            <person name="Morand S.C."/>
            <person name="Bertignac M."/>
            <person name="Iltis A."/>
            <person name="Kolder I.C.R.M."/>
            <person name="Pirovano W."/>
            <person name="Jourdain R."/>
            <person name="Clavaud C."/>
        </authorList>
    </citation>
    <scope>NUCLEOTIDE SEQUENCE [LARGE SCALE GENOMIC DNA]</scope>
    <source>
        <strain>ATCC 96810 / NBRC 103918 / CBS 7877</strain>
    </source>
</reference>
<gene>
    <name evidence="4" type="primary">SKT5</name>
    <name type="ORF">DNF11_3735</name>
</gene>
<keyword id="KW-1003">Cell membrane</keyword>
<keyword id="KW-0449">Lipoprotein</keyword>
<keyword id="KW-0472">Membrane</keyword>
<keyword id="KW-1185">Reference proteome</keyword>
<keyword id="KW-0677">Repeat</keyword>
<sequence length="1442" mass="151872">MTHPSAPRARSNGKEPEKEEPRCVHPDLTPLNVKDLDNKSSSAITNENVSSPTLLPFTERLSAIQPQIPNLLALKEPENGKNKHPDSEQDDGDMKEQRSKNLSPESDDPLLDHRHLQPGDTVSLLSHKATLQMYRDNAKKTNDPMLSYELAVFMLDVSRSLEFSQQMLSRGQDPAAESEQLAKEAMSILRRLADRGHVESQYLAGDCCMNGYGMSKGRPDLGLAYSYFVQAGKRGHPDAAYRAGTCYEKGWGCRRDPAKAVQFYKMAASRKHPGAQYRLGTAELNGELGLKRLAREGVKWLKRSAENATPEFPHALHELALLHEKGIYNVLFVDNEYSCELLAQAVEMGYAPSAYKLGVNYEYGRMGCPQDSGLSIHMYNIAAQQNHKEACFALTSWYLVGVPGILPQSDTEAYLWAKRAAEQGLAKAEYACGYFCENGIGTPRDLGEAKGWYQRAVEHGDNRASSRLNTLSGYTAKPVGIAADEASAKNLPQAIPVQPLSAPFPSAAPISTMRTLGVANYPTPKTMKETQAMQRDLHQQALVAAIEEREKPKTATPTSPQGPSFFGQKGSQGRPSEKPFSPSQPPKEGGKPMSLIAAGPRAGFPKPPTPPPPPPPEPEPDADAQLAANPKSFKSRLLRLGKMGKIRKGAASEGAEGEDAENVAGLEVPEGEEPLSATEKVPDGNEAPKSAPNADADKETGLNKDPAGVGEGAPSPKPETGAMVLSGPKPLGQARGQPPALTPGPSGPSSAAGADGAPRLPGEPKQHTLGDSSKPEAADKMSQEATEKSKDVNNEKSKNKKSEKSGGLSFFGLGKKIMNKGSDKPGSEDKKNQEVPKPSDEASPSIAKPTDTPAPLSPRPDEKNSSLVERSKDSESTSPSSPKPTTGSAEPSVPPMPAMPPSTVVRPSPSMALVPGRLPAIGAPDRTESNPVPASPQIGGIVPSRPPPPGVRPVMPGTMMTSRPFPPGARPGMPPNAQPGARPGMPPNAQPGARPGMPPNAQPGLRPGMPPNVQPGARPGMPPNVQPGARPGMPPNAQPGARPGMPPNAQPGLRPGMPPNAQPGLRPGMPPNVQPGARPGMPPNVQPGARPGMPPNAQPDTLSGLPLNVNAPEANNMLQLHPSAASGVRPPAALQPSLRPGPRPFSPTFPSPAGPSRPNPHLLPGVSSSSDGATPRANGHGVKPGSPPSMPEQHSFAPPAMQPGRPPSPSSPFGRPPTGPFSPSAVRMPRMPSQSSMHQSGNGPSPPKPGQMMNVSLPARTNQPHLGGASPRPPRPTSPPPFLTSQQPNRPPVPRGVMPPGSGPSMRPPQPPAIIPPPPRSPPARVNQPSLGPPGSSMPQGRMDMPSGPTAQGQSPLSKAMVSPPKMSSPDRPPFAPPTHVTPPKTPAKASGFSTPDSSSSKIMEFKDAESDNLNFGSATTTENAAAVGEDKSVRKKWLGFL</sequence>